<accession>A0RB09</accession>
<evidence type="ECO:0000255" key="1">
    <source>
        <dbReference type="HAMAP-Rule" id="MF_01860"/>
    </source>
</evidence>
<dbReference type="EMBL" id="CP000485">
    <property type="protein sequence ID" value="ABK84402.1"/>
    <property type="molecule type" value="Genomic_DNA"/>
</dbReference>
<dbReference type="RefSeq" id="WP_000966134.1">
    <property type="nucleotide sequence ID" value="NC_008600.1"/>
</dbReference>
<dbReference type="SMR" id="A0RB09"/>
<dbReference type="KEGG" id="btl:BALH_1040"/>
<dbReference type="HOGENOM" id="CLU_1101152_0_0_9"/>
<dbReference type="HAMAP" id="MF_01860">
    <property type="entry name" value="UPF0736"/>
    <property type="match status" value="1"/>
</dbReference>
<dbReference type="InterPro" id="IPR020909">
    <property type="entry name" value="UPF0736"/>
</dbReference>
<dbReference type="Pfam" id="PF12227">
    <property type="entry name" value="DUF3603"/>
    <property type="match status" value="1"/>
</dbReference>
<organism>
    <name type="scientific">Bacillus thuringiensis (strain Al Hakam)</name>
    <dbReference type="NCBI Taxonomy" id="412694"/>
    <lineage>
        <taxon>Bacteria</taxon>
        <taxon>Bacillati</taxon>
        <taxon>Bacillota</taxon>
        <taxon>Bacilli</taxon>
        <taxon>Bacillales</taxon>
        <taxon>Bacillaceae</taxon>
        <taxon>Bacillus</taxon>
        <taxon>Bacillus cereus group</taxon>
    </lineage>
</organism>
<gene>
    <name type="ordered locus">BALH_1040</name>
</gene>
<comment type="similarity">
    <text evidence="1">Belongs to the UPF0736 family.</text>
</comment>
<name>Y1040_BACAH</name>
<proteinExistence type="inferred from homology"/>
<protein>
    <recommendedName>
        <fullName evidence="1">UPF0736 protein BALH_1040</fullName>
    </recommendedName>
</protein>
<sequence>MLYLHDVWVNWFEGEENGYNVCHFYEWRKDDTIELLDQVPLLKVDSTLYHYIENELLELPQKLLEDVHHKAYIRKNHERLQQEYCFVVTDGKGIIAIDTIGYNVPIRKSRLIPRQEQMVYEMVENVQAEKYEFQVEEMEKEHHILSPSPFVMNGLTRKERQLKQLLFMALDQLHTTKNTAEIRYWFTEWDPSAYGMVQHMEFEDIWAKLYDEAKTGWSEKHEQLCERLVKGQPFFEKLWEMENEQKVN</sequence>
<reference key="1">
    <citation type="journal article" date="2007" name="J. Bacteriol.">
        <title>The complete genome sequence of Bacillus thuringiensis Al Hakam.</title>
        <authorList>
            <person name="Challacombe J.F."/>
            <person name="Altherr M.R."/>
            <person name="Xie G."/>
            <person name="Bhotika S.S."/>
            <person name="Brown N."/>
            <person name="Bruce D."/>
            <person name="Campbell C.S."/>
            <person name="Campbell M.L."/>
            <person name="Chen J."/>
            <person name="Chertkov O."/>
            <person name="Cleland C."/>
            <person name="Dimitrijevic M."/>
            <person name="Doggett N.A."/>
            <person name="Fawcett J.J."/>
            <person name="Glavina T."/>
            <person name="Goodwin L.A."/>
            <person name="Green L.D."/>
            <person name="Han C.S."/>
            <person name="Hill K.K."/>
            <person name="Hitchcock P."/>
            <person name="Jackson P.J."/>
            <person name="Keim P."/>
            <person name="Kewalramani A.R."/>
            <person name="Longmire J."/>
            <person name="Lucas S."/>
            <person name="Malfatti S."/>
            <person name="Martinez D."/>
            <person name="McMurry K."/>
            <person name="Meincke L.J."/>
            <person name="Misra M."/>
            <person name="Moseman B.L."/>
            <person name="Mundt M."/>
            <person name="Munk A.C."/>
            <person name="Okinaka R.T."/>
            <person name="Parson-Quintana B."/>
            <person name="Reilly L.P."/>
            <person name="Richardson P."/>
            <person name="Robinson D.L."/>
            <person name="Saunders E."/>
            <person name="Tapia R."/>
            <person name="Tesmer J.G."/>
            <person name="Thayer N."/>
            <person name="Thompson L.S."/>
            <person name="Tice H."/>
            <person name="Ticknor L.O."/>
            <person name="Wills P.L."/>
            <person name="Gilna P."/>
            <person name="Brettin T.S."/>
        </authorList>
    </citation>
    <scope>NUCLEOTIDE SEQUENCE [LARGE SCALE GENOMIC DNA]</scope>
    <source>
        <strain>Al Hakam</strain>
    </source>
</reference>
<feature type="chain" id="PRO_0000369148" description="UPF0736 protein BALH_1040">
    <location>
        <begin position="1"/>
        <end position="248"/>
    </location>
</feature>